<comment type="function">
    <text evidence="1">Catalyzes the formation of putrescine from agmatine.</text>
</comment>
<comment type="catalytic activity">
    <reaction evidence="1">
        <text>agmatine + H2O = urea + putrescine</text>
        <dbReference type="Rhea" id="RHEA:13929"/>
        <dbReference type="ChEBI" id="CHEBI:15377"/>
        <dbReference type="ChEBI" id="CHEBI:16199"/>
        <dbReference type="ChEBI" id="CHEBI:58145"/>
        <dbReference type="ChEBI" id="CHEBI:326268"/>
        <dbReference type="EC" id="3.5.3.11"/>
    </reaction>
</comment>
<comment type="cofactor">
    <cofactor evidence="1">
        <name>Mn(2+)</name>
        <dbReference type="ChEBI" id="CHEBI:29035"/>
    </cofactor>
</comment>
<comment type="pathway">
    <text evidence="1">Amine and polyamine biosynthesis; putrescine biosynthesis via agmatine pathway; putrescine from agmatine: step 1/1.</text>
</comment>
<comment type="similarity">
    <text evidence="1">Belongs to the arginase family. Agmatinase subfamily.</text>
</comment>
<evidence type="ECO:0000255" key="1">
    <source>
        <dbReference type="HAMAP-Rule" id="MF_01418"/>
    </source>
</evidence>
<organism>
    <name type="scientific">Escherichia coli (strain UTI89 / UPEC)</name>
    <dbReference type="NCBI Taxonomy" id="364106"/>
    <lineage>
        <taxon>Bacteria</taxon>
        <taxon>Pseudomonadati</taxon>
        <taxon>Pseudomonadota</taxon>
        <taxon>Gammaproteobacteria</taxon>
        <taxon>Enterobacterales</taxon>
        <taxon>Enterobacteriaceae</taxon>
        <taxon>Escherichia</taxon>
    </lineage>
</organism>
<proteinExistence type="inferred from homology"/>
<sequence length="306" mass="33571">MSTLGHQYDNSLVSNAFGFLRLPMNFQPYDSDADWVITGVPFDMATSGRAGGRHGPAAIRQVSTNLAWEHNRFPWNFDMRERLNVVDCGDLVYAFGDAREMSEKLQAHAEKLLAAGKRMLSFGGDHFVTLPLLRAHAKHFGKMALVHFDAHTDTYANGCEFDHGTMFYTAPKEGLIDPNHSVQIGIRTEFDKDNGFTVLDACQVNDRSVDDIIAQVKQIVGDMPVYLTFDIDCLDPAFAPGTGTPVIGGLTSDRAIKLVRGLKDLNIVGMDVVEVAPAYDQSEITALAAATLALEMLYIQAAKKGE</sequence>
<name>SPEB_ECOUT</name>
<protein>
    <recommendedName>
        <fullName evidence="1">Agmatinase</fullName>
        <ecNumber evidence="1">3.5.3.11</ecNumber>
    </recommendedName>
    <alternativeName>
        <fullName evidence="1">Agmatine ureohydrolase</fullName>
        <shortName evidence="1">AUH</shortName>
    </alternativeName>
</protein>
<reference key="1">
    <citation type="journal article" date="2006" name="Proc. Natl. Acad. Sci. U.S.A.">
        <title>Identification of genes subject to positive selection in uropathogenic strains of Escherichia coli: a comparative genomics approach.</title>
        <authorList>
            <person name="Chen S.L."/>
            <person name="Hung C.-S."/>
            <person name="Xu J."/>
            <person name="Reigstad C.S."/>
            <person name="Magrini V."/>
            <person name="Sabo A."/>
            <person name="Blasiar D."/>
            <person name="Bieri T."/>
            <person name="Meyer R.R."/>
            <person name="Ozersky P."/>
            <person name="Armstrong J.R."/>
            <person name="Fulton R.S."/>
            <person name="Latreille J.P."/>
            <person name="Spieth J."/>
            <person name="Hooton T.M."/>
            <person name="Mardis E.R."/>
            <person name="Hultgren S.J."/>
            <person name="Gordon J.I."/>
        </authorList>
    </citation>
    <scope>NUCLEOTIDE SEQUENCE [LARGE SCALE GENOMIC DNA]</scope>
    <source>
        <strain>UTI89 / UPEC</strain>
    </source>
</reference>
<accession>Q1R791</accession>
<feature type="chain" id="PRO_1000024280" description="Agmatinase">
    <location>
        <begin position="1"/>
        <end position="306"/>
    </location>
</feature>
<feature type="binding site" evidence="1">
    <location>
        <position position="126"/>
    </location>
    <ligand>
        <name>Mn(2+)</name>
        <dbReference type="ChEBI" id="CHEBI:29035"/>
    </ligand>
</feature>
<feature type="binding site" evidence="1">
    <location>
        <position position="149"/>
    </location>
    <ligand>
        <name>Mn(2+)</name>
        <dbReference type="ChEBI" id="CHEBI:29035"/>
    </ligand>
</feature>
<feature type="binding site" evidence="1">
    <location>
        <position position="151"/>
    </location>
    <ligand>
        <name>Mn(2+)</name>
        <dbReference type="ChEBI" id="CHEBI:29035"/>
    </ligand>
</feature>
<feature type="binding site" evidence="1">
    <location>
        <position position="153"/>
    </location>
    <ligand>
        <name>Mn(2+)</name>
        <dbReference type="ChEBI" id="CHEBI:29035"/>
    </ligand>
</feature>
<feature type="binding site" evidence="1">
    <location>
        <position position="230"/>
    </location>
    <ligand>
        <name>Mn(2+)</name>
        <dbReference type="ChEBI" id="CHEBI:29035"/>
    </ligand>
</feature>
<feature type="binding site" evidence="1">
    <location>
        <position position="232"/>
    </location>
    <ligand>
        <name>Mn(2+)</name>
        <dbReference type="ChEBI" id="CHEBI:29035"/>
    </ligand>
</feature>
<gene>
    <name evidence="1" type="primary">speB</name>
    <name type="ordered locus">UTI89_C3325</name>
</gene>
<dbReference type="EC" id="3.5.3.11" evidence="1"/>
<dbReference type="EMBL" id="CP000243">
    <property type="protein sequence ID" value="ABE08773.1"/>
    <property type="molecule type" value="Genomic_DNA"/>
</dbReference>
<dbReference type="RefSeq" id="WP_000105562.1">
    <property type="nucleotide sequence ID" value="NZ_CP064825.1"/>
</dbReference>
<dbReference type="SMR" id="Q1R791"/>
<dbReference type="KEGG" id="eci:UTI89_C3325"/>
<dbReference type="HOGENOM" id="CLU_039478_0_0_6"/>
<dbReference type="UniPathway" id="UPA00534">
    <property type="reaction ID" value="UER00287"/>
</dbReference>
<dbReference type="Proteomes" id="UP000001952">
    <property type="component" value="Chromosome"/>
</dbReference>
<dbReference type="GO" id="GO:0008783">
    <property type="term" value="F:agmatinase activity"/>
    <property type="evidence" value="ECO:0007669"/>
    <property type="project" value="UniProtKB-UniRule"/>
</dbReference>
<dbReference type="GO" id="GO:0030145">
    <property type="term" value="F:manganese ion binding"/>
    <property type="evidence" value="ECO:0007669"/>
    <property type="project" value="InterPro"/>
</dbReference>
<dbReference type="GO" id="GO:0033389">
    <property type="term" value="P:putrescine biosynthetic process from arginine, via agmatine"/>
    <property type="evidence" value="ECO:0007669"/>
    <property type="project" value="TreeGrafter"/>
</dbReference>
<dbReference type="GO" id="GO:0008295">
    <property type="term" value="P:spermidine biosynthetic process"/>
    <property type="evidence" value="ECO:0007669"/>
    <property type="project" value="UniProtKB-UniRule"/>
</dbReference>
<dbReference type="CDD" id="cd11592">
    <property type="entry name" value="Agmatinase_PAH"/>
    <property type="match status" value="1"/>
</dbReference>
<dbReference type="FunFam" id="3.40.800.10:FF:000001">
    <property type="entry name" value="Agmatinase"/>
    <property type="match status" value="1"/>
</dbReference>
<dbReference type="Gene3D" id="3.40.800.10">
    <property type="entry name" value="Ureohydrolase domain"/>
    <property type="match status" value="1"/>
</dbReference>
<dbReference type="HAMAP" id="MF_01418">
    <property type="entry name" value="SpeB"/>
    <property type="match status" value="1"/>
</dbReference>
<dbReference type="InterPro" id="IPR023694">
    <property type="entry name" value="Agmatinase"/>
</dbReference>
<dbReference type="InterPro" id="IPR005925">
    <property type="entry name" value="Agmatinase-rel"/>
</dbReference>
<dbReference type="InterPro" id="IPR006035">
    <property type="entry name" value="Ureohydrolase"/>
</dbReference>
<dbReference type="InterPro" id="IPR023696">
    <property type="entry name" value="Ureohydrolase_dom_sf"/>
</dbReference>
<dbReference type="InterPro" id="IPR020855">
    <property type="entry name" value="Ureohydrolase_Mn_BS"/>
</dbReference>
<dbReference type="NCBIfam" id="TIGR01230">
    <property type="entry name" value="agmatinase"/>
    <property type="match status" value="1"/>
</dbReference>
<dbReference type="NCBIfam" id="NF002564">
    <property type="entry name" value="PRK02190.1"/>
    <property type="match status" value="1"/>
</dbReference>
<dbReference type="PANTHER" id="PTHR11358">
    <property type="entry name" value="ARGINASE/AGMATINASE"/>
    <property type="match status" value="1"/>
</dbReference>
<dbReference type="PANTHER" id="PTHR11358:SF26">
    <property type="entry name" value="GUANIDINO ACID HYDROLASE, MITOCHONDRIAL"/>
    <property type="match status" value="1"/>
</dbReference>
<dbReference type="Pfam" id="PF00491">
    <property type="entry name" value="Arginase"/>
    <property type="match status" value="1"/>
</dbReference>
<dbReference type="PIRSF" id="PIRSF036979">
    <property type="entry name" value="Arginase"/>
    <property type="match status" value="1"/>
</dbReference>
<dbReference type="SUPFAM" id="SSF52768">
    <property type="entry name" value="Arginase/deacetylase"/>
    <property type="match status" value="1"/>
</dbReference>
<dbReference type="PROSITE" id="PS01053">
    <property type="entry name" value="ARGINASE_1"/>
    <property type="match status" value="1"/>
</dbReference>
<dbReference type="PROSITE" id="PS51409">
    <property type="entry name" value="ARGINASE_2"/>
    <property type="match status" value="1"/>
</dbReference>
<keyword id="KW-0378">Hydrolase</keyword>
<keyword id="KW-0464">Manganese</keyword>
<keyword id="KW-0479">Metal-binding</keyword>
<keyword id="KW-0620">Polyamine biosynthesis</keyword>
<keyword id="KW-0661">Putrescine biosynthesis</keyword>
<keyword id="KW-0745">Spermidine biosynthesis</keyword>